<comment type="function">
    <text evidence="2">Component of the ribosome, a large ribonucleoprotein complex responsible for the synthesis of proteins in the cell. The small ribosomal subunit (SSU) binds messenger RNAs (mRNAs) and translates the encoded message by selecting cognate aminoacyl-transfer RNA (tRNA) molecules. The large subunit (LSU) contains the ribosomal catalytic site termed the peptidyl transferase center (PTC), which catalyzes the formation of peptide bonds, thereby polymerizing the amino acids delivered by tRNAs into a polypeptide chain. The nascent polypeptides leave the ribosome through a tunnel in the LSU and interact with protein factors that function in enzymatic processing, targeting, and the membrane insertion of nascent chains at the exit of the ribosomal tunnel.</text>
</comment>
<comment type="cofactor">
    <cofactor evidence="2">
        <name>Zn(2+)</name>
        <dbReference type="ChEBI" id="CHEBI:29105"/>
    </cofactor>
    <text evidence="2">Binds 1 zinc ion per subunit.</text>
</comment>
<comment type="subunit">
    <text evidence="2">Component of the large ribosomal subunit (LSU). Mature yeast ribosomes consist of a small (40S) and a large (60S) subunit. The 40S small subunit contains 1 molecule of ribosomal RNA (18S rRNA) and at least 33 different proteins. The large 60S subunit contains 3 rRNA molecules (25S, 5.8S and 5S rRNA) and at least 46 different proteins.</text>
</comment>
<comment type="subcellular location">
    <subcellularLocation>
        <location evidence="4">Cytoplasm</location>
    </subcellularLocation>
</comment>
<comment type="miscellaneous">
    <text>There are 2 genes for eL37 in S.pombe.</text>
</comment>
<comment type="similarity">
    <text evidence="7">Belongs to the eukaryotic ribosomal protein eL37 family.</text>
</comment>
<accession>P05733</accession>
<accession>O14375</accession>
<accession>O42697</accession>
<accession>O74406</accession>
<evidence type="ECO:0000250" key="1"/>
<evidence type="ECO:0000250" key="2">
    <source>
        <dbReference type="UniProtKB" id="P51402"/>
    </source>
</evidence>
<evidence type="ECO:0000255" key="3"/>
<evidence type="ECO:0000269" key="4">
    <source>
    </source>
</evidence>
<evidence type="ECO:0000269" key="5">
    <source>
    </source>
</evidence>
<evidence type="ECO:0000303" key="6">
    <source>
    </source>
</evidence>
<evidence type="ECO:0000305" key="7"/>
<evidence type="ECO:0007829" key="8">
    <source>
        <dbReference type="PDB" id="8ETC"/>
    </source>
</evidence>
<evidence type="ECO:0007829" key="9">
    <source>
        <dbReference type="PDB" id="8ETJ"/>
    </source>
</evidence>
<evidence type="ECO:0007829" key="10">
    <source>
        <dbReference type="PDB" id="8EUY"/>
    </source>
</evidence>
<proteinExistence type="evidence at protein level"/>
<sequence>MTKGTQSFGMRHNKSHTICRRCGKRSFHIQKSTCACCGYPAAKTRSYNWGAKAKRRRTTGTGRMSYLKKVHRSFKNGFRSGKPAAAVAASA</sequence>
<protein>
    <recommendedName>
        <fullName evidence="7">Large ribosomal subunit protein eL37B</fullName>
    </recommendedName>
    <alternativeName>
        <fullName>60S ribosomal protein L37-B</fullName>
    </alternativeName>
    <alternativeName>
        <fullName evidence="6">SP-L27</fullName>
    </alternativeName>
</protein>
<dbReference type="EMBL" id="CU329672">
    <property type="protein sequence ID" value="CAA20874.1"/>
    <property type="molecule type" value="Genomic_DNA"/>
</dbReference>
<dbReference type="EMBL" id="U97370">
    <property type="protein sequence ID" value="AAB63862.1"/>
    <property type="molecule type" value="mRNA"/>
</dbReference>
<dbReference type="PIR" id="T40865">
    <property type="entry name" value="T40865"/>
</dbReference>
<dbReference type="RefSeq" id="NP_588350.1">
    <property type="nucleotide sequence ID" value="NM_001023341.2"/>
</dbReference>
<dbReference type="PDB" id="8ESQ">
    <property type="method" value="EM"/>
    <property type="resolution" value="2.80 A"/>
    <property type="chains" value="j=1-91"/>
</dbReference>
<dbReference type="PDB" id="8ESR">
    <property type="method" value="EM"/>
    <property type="resolution" value="3.20 A"/>
    <property type="chains" value="j=1-91"/>
</dbReference>
<dbReference type="PDB" id="8ETC">
    <property type="method" value="EM"/>
    <property type="resolution" value="3.10 A"/>
    <property type="chains" value="j=1-91"/>
</dbReference>
<dbReference type="PDB" id="8ETG">
    <property type="method" value="EM"/>
    <property type="resolution" value="3.40 A"/>
    <property type="chains" value="j=1-91"/>
</dbReference>
<dbReference type="PDB" id="8ETH">
    <property type="method" value="EM"/>
    <property type="resolution" value="3.80 A"/>
    <property type="chains" value="j=1-91"/>
</dbReference>
<dbReference type="PDB" id="8ETI">
    <property type="method" value="EM"/>
    <property type="resolution" value="3.70 A"/>
    <property type="chains" value="j=1-91"/>
</dbReference>
<dbReference type="PDB" id="8ETJ">
    <property type="method" value="EM"/>
    <property type="resolution" value="3.20 A"/>
    <property type="chains" value="j=1-91"/>
</dbReference>
<dbReference type="PDB" id="8EUG">
    <property type="method" value="EM"/>
    <property type="resolution" value="2.80 A"/>
    <property type="chains" value="j=1-91"/>
</dbReference>
<dbReference type="PDB" id="8EUI">
    <property type="method" value="EM"/>
    <property type="resolution" value="3.10 A"/>
    <property type="chains" value="j=1-91"/>
</dbReference>
<dbReference type="PDB" id="8EUP">
    <property type="method" value="EM"/>
    <property type="resolution" value="3.10 A"/>
    <property type="chains" value="j=1-91"/>
</dbReference>
<dbReference type="PDB" id="8EUY">
    <property type="method" value="EM"/>
    <property type="resolution" value="3.00 A"/>
    <property type="chains" value="j=1-91"/>
</dbReference>
<dbReference type="PDB" id="8EV3">
    <property type="method" value="EM"/>
    <property type="resolution" value="3.00 A"/>
    <property type="chains" value="j=1-91"/>
</dbReference>
<dbReference type="PDB" id="9AXT">
    <property type="method" value="EM"/>
    <property type="resolution" value="2.40 A"/>
    <property type="chains" value="Bv=1-91"/>
</dbReference>
<dbReference type="PDB" id="9AXU">
    <property type="method" value="EM"/>
    <property type="resolution" value="1.94 A"/>
    <property type="chains" value="v=1-91"/>
</dbReference>
<dbReference type="PDB" id="9AXV">
    <property type="method" value="EM"/>
    <property type="resolution" value="2.40 A"/>
    <property type="chains" value="Bv=1-91"/>
</dbReference>
<dbReference type="PDBsum" id="8ESQ"/>
<dbReference type="PDBsum" id="8ESR"/>
<dbReference type="PDBsum" id="8ETC"/>
<dbReference type="PDBsum" id="8ETG"/>
<dbReference type="PDBsum" id="8ETH"/>
<dbReference type="PDBsum" id="8ETI"/>
<dbReference type="PDBsum" id="8ETJ"/>
<dbReference type="PDBsum" id="8EUG"/>
<dbReference type="PDBsum" id="8EUI"/>
<dbReference type="PDBsum" id="8EUP"/>
<dbReference type="PDBsum" id="8EUY"/>
<dbReference type="PDBsum" id="8EV3"/>
<dbReference type="PDBsum" id="9AXT"/>
<dbReference type="PDBsum" id="9AXU"/>
<dbReference type="PDBsum" id="9AXV"/>
<dbReference type="EMDB" id="EMD-43972"/>
<dbReference type="EMDB" id="EMD-43973"/>
<dbReference type="EMDB" id="EMD-43976"/>
<dbReference type="SMR" id="P05733"/>
<dbReference type="BioGRID" id="275299">
    <property type="interactions" value="23"/>
</dbReference>
<dbReference type="FunCoup" id="P05733">
    <property type="interactions" value="280"/>
</dbReference>
<dbReference type="IntAct" id="P05733">
    <property type="interactions" value="1"/>
</dbReference>
<dbReference type="STRING" id="284812.P05733"/>
<dbReference type="iPTMnet" id="P05733"/>
<dbReference type="PaxDb" id="4896-SPCC1223.05c.1"/>
<dbReference type="EnsemblFungi" id="SPCC1223.05c.1">
    <property type="protein sequence ID" value="SPCC1223.05c.1:pep"/>
    <property type="gene ID" value="SPCC1223.05c"/>
</dbReference>
<dbReference type="GeneID" id="2538715"/>
<dbReference type="KEGG" id="spo:2538715"/>
<dbReference type="PomBase" id="SPCC1223.05c">
    <property type="gene designation" value="rpl3702"/>
</dbReference>
<dbReference type="VEuPathDB" id="FungiDB:SPCC1223.05c"/>
<dbReference type="eggNOG" id="KOG3475">
    <property type="taxonomic scope" value="Eukaryota"/>
</dbReference>
<dbReference type="HOGENOM" id="CLU_150908_2_1_1"/>
<dbReference type="InParanoid" id="P05733"/>
<dbReference type="OMA" id="RMAYLKH"/>
<dbReference type="PhylomeDB" id="P05733"/>
<dbReference type="Reactome" id="R-SPO-156827">
    <property type="pathway name" value="L13a-mediated translational silencing of Ceruloplasmin expression"/>
</dbReference>
<dbReference type="Reactome" id="R-SPO-1799339">
    <property type="pathway name" value="SRP-dependent cotranslational protein targeting to membrane"/>
</dbReference>
<dbReference type="Reactome" id="R-SPO-72689">
    <property type="pathway name" value="Formation of a pool of free 40S subunits"/>
</dbReference>
<dbReference type="Reactome" id="R-SPO-72706">
    <property type="pathway name" value="GTP hydrolysis and joining of the 60S ribosomal subunit"/>
</dbReference>
<dbReference type="Reactome" id="R-SPO-975956">
    <property type="pathway name" value="Nonsense Mediated Decay (NMD) independent of the Exon Junction Complex (EJC)"/>
</dbReference>
<dbReference type="Reactome" id="R-SPO-975957">
    <property type="pathway name" value="Nonsense Mediated Decay (NMD) enhanced by the Exon Junction Complex (EJC)"/>
</dbReference>
<dbReference type="PRO" id="PR:P05733"/>
<dbReference type="Proteomes" id="UP000002485">
    <property type="component" value="Chromosome III"/>
</dbReference>
<dbReference type="GO" id="GO:0005829">
    <property type="term" value="C:cytosol"/>
    <property type="evidence" value="ECO:0007005"/>
    <property type="project" value="PomBase"/>
</dbReference>
<dbReference type="GO" id="GO:0022625">
    <property type="term" value="C:cytosolic large ribosomal subunit"/>
    <property type="evidence" value="ECO:0000269"/>
    <property type="project" value="PomBase"/>
</dbReference>
<dbReference type="GO" id="GO:0030684">
    <property type="term" value="C:preribosome"/>
    <property type="evidence" value="ECO:0000314"/>
    <property type="project" value="PomBase"/>
</dbReference>
<dbReference type="GO" id="GO:0003723">
    <property type="term" value="F:RNA binding"/>
    <property type="evidence" value="ECO:0000318"/>
    <property type="project" value="GO_Central"/>
</dbReference>
<dbReference type="GO" id="GO:0019843">
    <property type="term" value="F:rRNA binding"/>
    <property type="evidence" value="ECO:0000250"/>
    <property type="project" value="PomBase"/>
</dbReference>
<dbReference type="GO" id="GO:0003735">
    <property type="term" value="F:structural constituent of ribosome"/>
    <property type="evidence" value="ECO:0000266"/>
    <property type="project" value="PomBase"/>
</dbReference>
<dbReference type="GO" id="GO:0008270">
    <property type="term" value="F:zinc ion binding"/>
    <property type="evidence" value="ECO:0000250"/>
    <property type="project" value="PomBase"/>
</dbReference>
<dbReference type="GO" id="GO:0002181">
    <property type="term" value="P:cytoplasmic translation"/>
    <property type="evidence" value="ECO:0000266"/>
    <property type="project" value="PomBase"/>
</dbReference>
<dbReference type="FunFam" id="2.20.25.30:FF:000001">
    <property type="entry name" value="Ribosomal protein L37"/>
    <property type="match status" value="1"/>
</dbReference>
<dbReference type="Gene3D" id="2.20.25.30">
    <property type="match status" value="1"/>
</dbReference>
<dbReference type="InterPro" id="IPR001569">
    <property type="entry name" value="Ribosomal_eL37"/>
</dbReference>
<dbReference type="InterPro" id="IPR011331">
    <property type="entry name" value="Ribosomal_eL37/eL43"/>
</dbReference>
<dbReference type="InterPro" id="IPR018267">
    <property type="entry name" value="Ribosomal_eL37_CS"/>
</dbReference>
<dbReference type="InterPro" id="IPR011332">
    <property type="entry name" value="Ribosomal_zn-bd"/>
</dbReference>
<dbReference type="PANTHER" id="PTHR10768">
    <property type="entry name" value="60S RIBOSOMAL PROTEIN L37"/>
    <property type="match status" value="1"/>
</dbReference>
<dbReference type="PANTHER" id="PTHR10768:SF0">
    <property type="entry name" value="RIBOSOMAL PROTEIN L37"/>
    <property type="match status" value="1"/>
</dbReference>
<dbReference type="Pfam" id="PF01907">
    <property type="entry name" value="Ribosomal_L37e"/>
    <property type="match status" value="1"/>
</dbReference>
<dbReference type="SUPFAM" id="SSF57829">
    <property type="entry name" value="Zn-binding ribosomal proteins"/>
    <property type="match status" value="1"/>
</dbReference>
<dbReference type="PROSITE" id="PS01077">
    <property type="entry name" value="RIBOSOMAL_L37E"/>
    <property type="match status" value="1"/>
</dbReference>
<keyword id="KW-0002">3D-structure</keyword>
<keyword id="KW-0963">Cytoplasm</keyword>
<keyword id="KW-0903">Direct protein sequencing</keyword>
<keyword id="KW-0479">Metal-binding</keyword>
<keyword id="KW-1185">Reference proteome</keyword>
<keyword id="KW-0687">Ribonucleoprotein</keyword>
<keyword id="KW-0689">Ribosomal protein</keyword>
<keyword id="KW-0694">RNA-binding</keyword>
<keyword id="KW-0699">rRNA-binding</keyword>
<keyword id="KW-0862">Zinc</keyword>
<keyword id="KW-0863">Zinc-finger</keyword>
<feature type="initiator methionine" description="Removed" evidence="5">
    <location>
        <position position="1"/>
    </location>
</feature>
<feature type="chain" id="PRO_0000139721" description="Large ribosomal subunit protein eL37B">
    <location>
        <begin position="2"/>
        <end position="91"/>
    </location>
</feature>
<feature type="zinc finger region" description="C4-type" evidence="3">
    <location>
        <begin position="19"/>
        <end position="37"/>
    </location>
</feature>
<feature type="binding site" evidence="1">
    <location>
        <position position="19"/>
    </location>
    <ligand>
        <name>Zn(2+)</name>
        <dbReference type="ChEBI" id="CHEBI:29105"/>
    </ligand>
</feature>
<feature type="binding site" evidence="1">
    <location>
        <position position="22"/>
    </location>
    <ligand>
        <name>Zn(2+)</name>
        <dbReference type="ChEBI" id="CHEBI:29105"/>
    </ligand>
</feature>
<feature type="binding site" evidence="1">
    <location>
        <position position="34"/>
    </location>
    <ligand>
        <name>Zn(2+)</name>
        <dbReference type="ChEBI" id="CHEBI:29105"/>
    </ligand>
</feature>
<feature type="binding site" evidence="1">
    <location>
        <position position="37"/>
    </location>
    <ligand>
        <name>Zn(2+)</name>
        <dbReference type="ChEBI" id="CHEBI:29105"/>
    </ligand>
</feature>
<feature type="sequence conflict" description="In Ref. 2; AAB63862." evidence="7" ref="2">
    <original>T</original>
    <variation>A</variation>
    <location>
        <position position="2"/>
    </location>
</feature>
<feature type="sequence conflict" description="In Ref. 3; AA sequence." evidence="7" ref="3">
    <original>C</original>
    <variation>G</variation>
    <location>
        <position position="19"/>
    </location>
</feature>
<feature type="sequence conflict" description="In Ref. 3; AA sequence." evidence="7" ref="3">
    <original>C</original>
    <variation>K</variation>
    <location>
        <position position="22"/>
    </location>
</feature>
<feature type="sequence conflict" description="In Ref. 2; AAB63862." evidence="7" ref="2">
    <original>AC</original>
    <variation>GM</variation>
    <location>
        <begin position="35"/>
        <end position="36"/>
    </location>
</feature>
<feature type="sequence conflict" description="In Ref. 2; AAB63862." evidence="7" ref="2">
    <original>A</original>
    <variation>G</variation>
    <location>
        <position position="53"/>
    </location>
</feature>
<feature type="strand" evidence="8">
    <location>
        <begin position="15"/>
        <end position="18"/>
    </location>
</feature>
<feature type="turn" evidence="10">
    <location>
        <begin position="20"/>
        <end position="22"/>
    </location>
</feature>
<feature type="strand" evidence="9">
    <location>
        <begin position="24"/>
        <end position="28"/>
    </location>
</feature>
<feature type="turn" evidence="10">
    <location>
        <begin position="29"/>
        <end position="32"/>
    </location>
</feature>
<feature type="turn" evidence="10">
    <location>
        <begin position="35"/>
        <end position="37"/>
    </location>
</feature>
<feature type="strand" evidence="10">
    <location>
        <begin position="41"/>
        <end position="43"/>
    </location>
</feature>
<feature type="helix" evidence="10">
    <location>
        <begin position="51"/>
        <end position="57"/>
    </location>
</feature>
<feature type="helix" evidence="10">
    <location>
        <begin position="65"/>
        <end position="74"/>
    </location>
</feature>
<feature type="turn" evidence="10">
    <location>
        <begin position="75"/>
        <end position="77"/>
    </location>
</feature>
<name>RL37B_SCHPO</name>
<organism>
    <name type="scientific">Schizosaccharomyces pombe (strain 972 / ATCC 24843)</name>
    <name type="common">Fission yeast</name>
    <dbReference type="NCBI Taxonomy" id="284812"/>
    <lineage>
        <taxon>Eukaryota</taxon>
        <taxon>Fungi</taxon>
        <taxon>Dikarya</taxon>
        <taxon>Ascomycota</taxon>
        <taxon>Taphrinomycotina</taxon>
        <taxon>Schizosaccharomycetes</taxon>
        <taxon>Schizosaccharomycetales</taxon>
        <taxon>Schizosaccharomycetaceae</taxon>
        <taxon>Schizosaccharomyces</taxon>
    </lineage>
</organism>
<reference key="1">
    <citation type="journal article" date="2002" name="Nature">
        <title>The genome sequence of Schizosaccharomyces pombe.</title>
        <authorList>
            <person name="Wood V."/>
            <person name="Gwilliam R."/>
            <person name="Rajandream M.A."/>
            <person name="Lyne M.H."/>
            <person name="Lyne R."/>
            <person name="Stewart A."/>
            <person name="Sgouros J.G."/>
            <person name="Peat N."/>
            <person name="Hayles J."/>
            <person name="Baker S.G."/>
            <person name="Basham D."/>
            <person name="Bowman S."/>
            <person name="Brooks K."/>
            <person name="Brown D."/>
            <person name="Brown S."/>
            <person name="Chillingworth T."/>
            <person name="Churcher C.M."/>
            <person name="Collins M."/>
            <person name="Connor R."/>
            <person name="Cronin A."/>
            <person name="Davis P."/>
            <person name="Feltwell T."/>
            <person name="Fraser A."/>
            <person name="Gentles S."/>
            <person name="Goble A."/>
            <person name="Hamlin N."/>
            <person name="Harris D.E."/>
            <person name="Hidalgo J."/>
            <person name="Hodgson G."/>
            <person name="Holroyd S."/>
            <person name="Hornsby T."/>
            <person name="Howarth S."/>
            <person name="Huckle E.J."/>
            <person name="Hunt S."/>
            <person name="Jagels K."/>
            <person name="James K.D."/>
            <person name="Jones L."/>
            <person name="Jones M."/>
            <person name="Leather S."/>
            <person name="McDonald S."/>
            <person name="McLean J."/>
            <person name="Mooney P."/>
            <person name="Moule S."/>
            <person name="Mungall K.L."/>
            <person name="Murphy L.D."/>
            <person name="Niblett D."/>
            <person name="Odell C."/>
            <person name="Oliver K."/>
            <person name="O'Neil S."/>
            <person name="Pearson D."/>
            <person name="Quail M.A."/>
            <person name="Rabbinowitsch E."/>
            <person name="Rutherford K.M."/>
            <person name="Rutter S."/>
            <person name="Saunders D."/>
            <person name="Seeger K."/>
            <person name="Sharp S."/>
            <person name="Skelton J."/>
            <person name="Simmonds M.N."/>
            <person name="Squares R."/>
            <person name="Squares S."/>
            <person name="Stevens K."/>
            <person name="Taylor K."/>
            <person name="Taylor R.G."/>
            <person name="Tivey A."/>
            <person name="Walsh S.V."/>
            <person name="Warren T."/>
            <person name="Whitehead S."/>
            <person name="Woodward J.R."/>
            <person name="Volckaert G."/>
            <person name="Aert R."/>
            <person name="Robben J."/>
            <person name="Grymonprez B."/>
            <person name="Weltjens I."/>
            <person name="Vanstreels E."/>
            <person name="Rieger M."/>
            <person name="Schaefer M."/>
            <person name="Mueller-Auer S."/>
            <person name="Gabel C."/>
            <person name="Fuchs M."/>
            <person name="Duesterhoeft A."/>
            <person name="Fritzc C."/>
            <person name="Holzer E."/>
            <person name="Moestl D."/>
            <person name="Hilbert H."/>
            <person name="Borzym K."/>
            <person name="Langer I."/>
            <person name="Beck A."/>
            <person name="Lehrach H."/>
            <person name="Reinhardt R."/>
            <person name="Pohl T.M."/>
            <person name="Eger P."/>
            <person name="Zimmermann W."/>
            <person name="Wedler H."/>
            <person name="Wambutt R."/>
            <person name="Purnelle B."/>
            <person name="Goffeau A."/>
            <person name="Cadieu E."/>
            <person name="Dreano S."/>
            <person name="Gloux S."/>
            <person name="Lelaure V."/>
            <person name="Mottier S."/>
            <person name="Galibert F."/>
            <person name="Aves S.J."/>
            <person name="Xiang Z."/>
            <person name="Hunt C."/>
            <person name="Moore K."/>
            <person name="Hurst S.M."/>
            <person name="Lucas M."/>
            <person name="Rochet M."/>
            <person name="Gaillardin C."/>
            <person name="Tallada V.A."/>
            <person name="Garzon A."/>
            <person name="Thode G."/>
            <person name="Daga R.R."/>
            <person name="Cruzado L."/>
            <person name="Jimenez J."/>
            <person name="Sanchez M."/>
            <person name="del Rey F."/>
            <person name="Benito J."/>
            <person name="Dominguez A."/>
            <person name="Revuelta J.L."/>
            <person name="Moreno S."/>
            <person name="Armstrong J."/>
            <person name="Forsburg S.L."/>
            <person name="Cerutti L."/>
            <person name="Lowe T."/>
            <person name="McCombie W.R."/>
            <person name="Paulsen I."/>
            <person name="Potashkin J."/>
            <person name="Shpakovski G.V."/>
            <person name="Ussery D."/>
            <person name="Barrell B.G."/>
            <person name="Nurse P."/>
        </authorList>
    </citation>
    <scope>NUCLEOTIDE SEQUENCE [LARGE SCALE GENOMIC DNA]</scope>
    <source>
        <strain>972 / ATCC 24843</strain>
    </source>
</reference>
<reference key="2">
    <citation type="submission" date="1997-04" db="EMBL/GenBank/DDBJ databases">
        <authorList>
            <person name="Jang Y.J."/>
            <person name="Yoo H.S."/>
        </authorList>
    </citation>
    <scope>NUCLEOTIDE SEQUENCE [MRNA] OF 1-60</scope>
    <source>
        <strain>972 / ATCC 24843</strain>
    </source>
</reference>
<reference key="3">
    <citation type="journal article" date="1983" name="Mol. Gen. Genet.">
        <title>Yeast ribosomal proteins: VII. Cytoplasmic ribosomal proteins from Schizosaccharomyces pombe.</title>
        <authorList>
            <person name="Otaka E."/>
            <person name="Higo K."/>
            <person name="Itoh T."/>
        </authorList>
    </citation>
    <scope>PROTEIN SEQUENCE OF 2-24</scope>
</reference>
<reference key="4">
    <citation type="journal article" date="2006" name="Nat. Biotechnol.">
        <title>ORFeome cloning and global analysis of protein localization in the fission yeast Schizosaccharomyces pombe.</title>
        <authorList>
            <person name="Matsuyama A."/>
            <person name="Arai R."/>
            <person name="Yashiroda Y."/>
            <person name="Shirai A."/>
            <person name="Kamata A."/>
            <person name="Sekido S."/>
            <person name="Kobayashi Y."/>
            <person name="Hashimoto A."/>
            <person name="Hamamoto M."/>
            <person name="Hiraoka Y."/>
            <person name="Horinouchi S."/>
            <person name="Yoshida M."/>
        </authorList>
    </citation>
    <scope>SUBCELLULAR LOCATION [LARGE SCALE ANALYSIS]</scope>
</reference>
<gene>
    <name type="primary">rpl3702</name>
    <name type="synonym">rpl37b</name>
    <name type="ORF">SPCC1223.05c</name>
</gene>